<keyword id="KW-0119">Carbohydrate metabolism</keyword>
<keyword id="KW-0325">Glycoprotein</keyword>
<keyword id="KW-0326">Glycosidase</keyword>
<keyword id="KW-0378">Hydrolase</keyword>
<keyword id="KW-0624">Polysaccharide degradation</keyword>
<keyword id="KW-1185">Reference proteome</keyword>
<keyword id="KW-0964">Secreted</keyword>
<keyword id="KW-0732">Signal</keyword>
<keyword id="KW-0858">Xylan degradation</keyword>
<dbReference type="EC" id="3.2.1.99"/>
<dbReference type="EMBL" id="BA000051">
    <property type="protein sequence ID" value="BAE58741.1"/>
    <property type="molecule type" value="Genomic_DNA"/>
</dbReference>
<dbReference type="SMR" id="Q2UI74"/>
<dbReference type="STRING" id="510516.Q2UI74"/>
<dbReference type="CAZy" id="GH43">
    <property type="family name" value="Glycoside Hydrolase Family 43"/>
</dbReference>
<dbReference type="GlyCosmos" id="Q2UI74">
    <property type="glycosylation" value="1 site, No reported glycans"/>
</dbReference>
<dbReference type="EnsemblFungi" id="BAE58741">
    <property type="protein sequence ID" value="BAE58741"/>
    <property type="gene ID" value="AO090023000165"/>
</dbReference>
<dbReference type="HOGENOM" id="CLU_009397_5_0_1"/>
<dbReference type="UniPathway" id="UPA00667"/>
<dbReference type="Proteomes" id="UP000006564">
    <property type="component" value="Chromosome 3"/>
</dbReference>
<dbReference type="GO" id="GO:0005576">
    <property type="term" value="C:extracellular region"/>
    <property type="evidence" value="ECO:0007669"/>
    <property type="project" value="UniProtKB-SubCell"/>
</dbReference>
<dbReference type="GO" id="GO:0046558">
    <property type="term" value="F:arabinan endo-1,5-alpha-L-arabinosidase activity"/>
    <property type="evidence" value="ECO:0007669"/>
    <property type="project" value="UniProtKB-EC"/>
</dbReference>
<dbReference type="GO" id="GO:0031222">
    <property type="term" value="P:arabinan catabolic process"/>
    <property type="evidence" value="ECO:0007669"/>
    <property type="project" value="UniProtKB-UniPathway"/>
</dbReference>
<dbReference type="GO" id="GO:0045493">
    <property type="term" value="P:xylan catabolic process"/>
    <property type="evidence" value="ECO:0007669"/>
    <property type="project" value="UniProtKB-KW"/>
</dbReference>
<dbReference type="CDD" id="cd18831">
    <property type="entry name" value="GH43_AnAbnA-like"/>
    <property type="match status" value="1"/>
</dbReference>
<dbReference type="Gene3D" id="2.115.10.20">
    <property type="entry name" value="Glycosyl hydrolase domain, family 43"/>
    <property type="match status" value="1"/>
</dbReference>
<dbReference type="InterPro" id="IPR050727">
    <property type="entry name" value="GH43_arabinanases"/>
</dbReference>
<dbReference type="InterPro" id="IPR006710">
    <property type="entry name" value="Glyco_hydro_43"/>
</dbReference>
<dbReference type="InterPro" id="IPR016840">
    <property type="entry name" value="Glyco_hydro_43_endo_a_Ara-ase"/>
</dbReference>
<dbReference type="InterPro" id="IPR023296">
    <property type="entry name" value="Glyco_hydro_beta-prop_sf"/>
</dbReference>
<dbReference type="PANTHER" id="PTHR43301">
    <property type="entry name" value="ARABINAN ENDO-1,5-ALPHA-L-ARABINOSIDASE"/>
    <property type="match status" value="1"/>
</dbReference>
<dbReference type="PANTHER" id="PTHR43301:SF4">
    <property type="entry name" value="ARABINAN ENDO-1,5-ALPHA-L-ARABINOSIDASE B"/>
    <property type="match status" value="1"/>
</dbReference>
<dbReference type="Pfam" id="PF04616">
    <property type="entry name" value="Glyco_hydro_43"/>
    <property type="match status" value="1"/>
</dbReference>
<dbReference type="PIRSF" id="PIRSF026534">
    <property type="entry name" value="Endo_alpha-L-arabinosidase"/>
    <property type="match status" value="1"/>
</dbReference>
<dbReference type="SUPFAM" id="SSF75005">
    <property type="entry name" value="Arabinanase/levansucrase/invertase"/>
    <property type="match status" value="1"/>
</dbReference>
<protein>
    <recommendedName>
        <fullName>Probable arabinan endo-1,5-alpha-L-arabinosidase B</fullName>
        <ecNumber>3.2.1.99</ecNumber>
    </recommendedName>
    <alternativeName>
        <fullName>Endo-1,5-alpha-L-arabinanase B</fullName>
        <shortName>ABN B</shortName>
    </alternativeName>
</protein>
<gene>
    <name type="primary">abnB</name>
    <name type="ORF">AO090023000165</name>
</gene>
<sequence length="353" mass="38400">MVLVATLFSLFTVSLCRSIPRSSPSSSPYTQATDLKIHDPTVINANGAYYAYGVGEHIVIHQAPGLAGPWKQIGSVLDKDSIIPKGDRAKPWAPTTIEVKGTFYCYYSVSNAGCRDSAIGVATSQSPGPGGWTDHGAIVQSGTGQGSDEHPFNEVNAIDPAVLVTGDKGHLVFGSYWSGIWQVPLNEDFSSVGNTTGLNAHHLAKHPKTERVNSQDQNPDPLCRDSSGRRPVEGAYISYHAPYYYLWLSWGQCCDYDPNNLPPSGEEYSIRVGRSESPHGPFVDKQGKELTQGGGELIYGSNNDVYAPGGQGVITVETGDILYYHYSLYRYSTHSLYTFANLDFNQGCTLFIQ</sequence>
<evidence type="ECO:0000250" key="1"/>
<evidence type="ECO:0000250" key="2">
    <source>
        <dbReference type="UniProtKB" id="P94522"/>
    </source>
</evidence>
<evidence type="ECO:0000255" key="3"/>
<evidence type="ECO:0000256" key="4">
    <source>
        <dbReference type="SAM" id="MobiDB-lite"/>
    </source>
</evidence>
<evidence type="ECO:0000305" key="5"/>
<organism>
    <name type="scientific">Aspergillus oryzae (strain ATCC 42149 / RIB 40)</name>
    <name type="common">Yellow koji mold</name>
    <dbReference type="NCBI Taxonomy" id="510516"/>
    <lineage>
        <taxon>Eukaryota</taxon>
        <taxon>Fungi</taxon>
        <taxon>Dikarya</taxon>
        <taxon>Ascomycota</taxon>
        <taxon>Pezizomycotina</taxon>
        <taxon>Eurotiomycetes</taxon>
        <taxon>Eurotiomycetidae</taxon>
        <taxon>Eurotiales</taxon>
        <taxon>Aspergillaceae</taxon>
        <taxon>Aspergillus</taxon>
        <taxon>Aspergillus subgen. Circumdati</taxon>
    </lineage>
</organism>
<feature type="signal peptide" evidence="3">
    <location>
        <begin position="1"/>
        <end position="16"/>
    </location>
</feature>
<feature type="chain" id="PRO_0000394628" description="Probable arabinan endo-1,5-alpha-L-arabinosidase B">
    <location>
        <begin position="17"/>
        <end position="353"/>
    </location>
</feature>
<feature type="region of interest" description="Disordered" evidence="4">
    <location>
        <begin position="202"/>
        <end position="227"/>
    </location>
</feature>
<feature type="active site" description="Proton acceptor" evidence="2">
    <location>
        <position position="39"/>
    </location>
</feature>
<feature type="active site" description="Proton donor" evidence="2">
    <location>
        <position position="233"/>
    </location>
</feature>
<feature type="site" description="Important for catalytic activity, responsible for pKa modulation of the active site Glu and correct orientation of both the proton donor and substrate" evidence="2">
    <location>
        <position position="159"/>
    </location>
</feature>
<feature type="glycosylation site" description="N-linked (GlcNAc...) asparagine" evidence="3">
    <location>
        <position position="194"/>
    </location>
</feature>
<reference key="1">
    <citation type="journal article" date="2005" name="Nature">
        <title>Genome sequencing and analysis of Aspergillus oryzae.</title>
        <authorList>
            <person name="Machida M."/>
            <person name="Asai K."/>
            <person name="Sano M."/>
            <person name="Tanaka T."/>
            <person name="Kumagai T."/>
            <person name="Terai G."/>
            <person name="Kusumoto K."/>
            <person name="Arima T."/>
            <person name="Akita O."/>
            <person name="Kashiwagi Y."/>
            <person name="Abe K."/>
            <person name="Gomi K."/>
            <person name="Horiuchi H."/>
            <person name="Kitamoto K."/>
            <person name="Kobayashi T."/>
            <person name="Takeuchi M."/>
            <person name="Denning D.W."/>
            <person name="Galagan J.E."/>
            <person name="Nierman W.C."/>
            <person name="Yu J."/>
            <person name="Archer D.B."/>
            <person name="Bennett J.W."/>
            <person name="Bhatnagar D."/>
            <person name="Cleveland T.E."/>
            <person name="Fedorova N.D."/>
            <person name="Gotoh O."/>
            <person name="Horikawa H."/>
            <person name="Hosoyama A."/>
            <person name="Ichinomiya M."/>
            <person name="Igarashi R."/>
            <person name="Iwashita K."/>
            <person name="Juvvadi P.R."/>
            <person name="Kato M."/>
            <person name="Kato Y."/>
            <person name="Kin T."/>
            <person name="Kokubun A."/>
            <person name="Maeda H."/>
            <person name="Maeyama N."/>
            <person name="Maruyama J."/>
            <person name="Nagasaki H."/>
            <person name="Nakajima T."/>
            <person name="Oda K."/>
            <person name="Okada K."/>
            <person name="Paulsen I."/>
            <person name="Sakamoto K."/>
            <person name="Sawano T."/>
            <person name="Takahashi M."/>
            <person name="Takase K."/>
            <person name="Terabayashi Y."/>
            <person name="Wortman J.R."/>
            <person name="Yamada O."/>
            <person name="Yamagata Y."/>
            <person name="Anazawa H."/>
            <person name="Hata Y."/>
            <person name="Koide Y."/>
            <person name="Komori T."/>
            <person name="Koyama Y."/>
            <person name="Minetoki T."/>
            <person name="Suharnan S."/>
            <person name="Tanaka A."/>
            <person name="Isono K."/>
            <person name="Kuhara S."/>
            <person name="Ogasawara N."/>
            <person name="Kikuchi H."/>
        </authorList>
    </citation>
    <scope>NUCLEOTIDE SEQUENCE [LARGE SCALE GENOMIC DNA]</scope>
    <source>
        <strain>ATCC 42149 / RIB 40</strain>
    </source>
</reference>
<proteinExistence type="inferred from homology"/>
<comment type="function">
    <text evidence="1">Endo-1,5-alpha-L-arabinanase involved in degradation of pectin. Its preferred substrate is linear 1,5-alpha-L-arabinan (By similarity).</text>
</comment>
<comment type="catalytic activity">
    <reaction>
        <text>Endohydrolysis of (1-&gt;5)-alpha-arabinofuranosidic linkages in (1-&gt;5)-arabinans.</text>
        <dbReference type="EC" id="3.2.1.99"/>
    </reaction>
</comment>
<comment type="pathway">
    <text>Glycan metabolism; L-arabinan degradation.</text>
</comment>
<comment type="subcellular location">
    <subcellularLocation>
        <location evidence="1">Secreted</location>
    </subcellularLocation>
</comment>
<comment type="similarity">
    <text evidence="5">Belongs to the glycosyl hydrolase 43 family.</text>
</comment>
<name>ABNB_ASPOR</name>
<accession>Q2UI74</accession>